<keyword id="KW-0175">Coiled coil</keyword>
<keyword id="KW-1185">Reference proteome</keyword>
<protein>
    <recommendedName>
        <fullName>Oxysterol-binding protein 8</fullName>
    </recommendedName>
    <alternativeName>
        <fullName>OSBPh</fullName>
    </alternativeName>
</protein>
<dbReference type="EMBL" id="AAFI02000056">
    <property type="protein sequence ID" value="EAL65621.1"/>
    <property type="molecule type" value="Genomic_DNA"/>
</dbReference>
<dbReference type="RefSeq" id="XP_638977.1">
    <property type="nucleotide sequence ID" value="XM_633885.1"/>
</dbReference>
<dbReference type="SMR" id="Q54QP6"/>
<dbReference type="FunCoup" id="Q54QP6">
    <property type="interactions" value="139"/>
</dbReference>
<dbReference type="STRING" id="44689.Q54QP6"/>
<dbReference type="PaxDb" id="44689-DDB0237794"/>
<dbReference type="EnsemblProtists" id="EAL65621">
    <property type="protein sequence ID" value="EAL65621"/>
    <property type="gene ID" value="DDB_G0283709"/>
</dbReference>
<dbReference type="GeneID" id="8624223"/>
<dbReference type="KEGG" id="ddi:DDB_G0283709"/>
<dbReference type="dictyBase" id="DDB_G0283709">
    <property type="gene designation" value="osbH"/>
</dbReference>
<dbReference type="VEuPathDB" id="AmoebaDB:DDB_G0283709"/>
<dbReference type="eggNOG" id="KOG1737">
    <property type="taxonomic scope" value="Eukaryota"/>
</dbReference>
<dbReference type="HOGENOM" id="CLU_007105_6_0_1"/>
<dbReference type="InParanoid" id="Q54QP6"/>
<dbReference type="OMA" id="MSEPLQY"/>
<dbReference type="PhylomeDB" id="Q54QP6"/>
<dbReference type="Reactome" id="R-DDI-192105">
    <property type="pathway name" value="Synthesis of bile acids and bile salts"/>
</dbReference>
<dbReference type="PRO" id="PR:Q54QP6"/>
<dbReference type="Proteomes" id="UP000002195">
    <property type="component" value="Chromosome 4"/>
</dbReference>
<dbReference type="GO" id="GO:0005829">
    <property type="term" value="C:cytosol"/>
    <property type="evidence" value="ECO:0000314"/>
    <property type="project" value="dictyBase"/>
</dbReference>
<dbReference type="GO" id="GO:0071782">
    <property type="term" value="C:endoplasmic reticulum tubular network"/>
    <property type="evidence" value="ECO:0000314"/>
    <property type="project" value="dictyBase"/>
</dbReference>
<dbReference type="GO" id="GO:0016020">
    <property type="term" value="C:membrane"/>
    <property type="evidence" value="ECO:0000318"/>
    <property type="project" value="GO_Central"/>
</dbReference>
<dbReference type="GO" id="GO:0140220">
    <property type="term" value="C:pathogen-containing vacuole"/>
    <property type="evidence" value="ECO:0000314"/>
    <property type="project" value="dictyBase"/>
</dbReference>
<dbReference type="GO" id="GO:0045335">
    <property type="term" value="C:phagocytic vesicle"/>
    <property type="evidence" value="ECO:0007005"/>
    <property type="project" value="dictyBase"/>
</dbReference>
<dbReference type="GO" id="GO:0008526">
    <property type="term" value="F:phosphatidylinositol transfer activity"/>
    <property type="evidence" value="ECO:0000315"/>
    <property type="project" value="dictyBase"/>
</dbReference>
<dbReference type="GO" id="GO:0032934">
    <property type="term" value="F:sterol binding"/>
    <property type="evidence" value="ECO:0000318"/>
    <property type="project" value="GO_Central"/>
</dbReference>
<dbReference type="GO" id="GO:0050830">
    <property type="term" value="P:defense response to Gram-positive bacterium"/>
    <property type="evidence" value="ECO:0000315"/>
    <property type="project" value="dictyBase"/>
</dbReference>
<dbReference type="GO" id="GO:0015914">
    <property type="term" value="P:phospholipid transport"/>
    <property type="evidence" value="ECO:0000315"/>
    <property type="project" value="dictyBase"/>
</dbReference>
<dbReference type="FunFam" id="3.30.70.3490:FF:000041">
    <property type="match status" value="1"/>
</dbReference>
<dbReference type="FunFam" id="2.40.160.120:FF:000034">
    <property type="entry name" value="Oxysterol-binding protein 11"/>
    <property type="match status" value="1"/>
</dbReference>
<dbReference type="Gene3D" id="2.40.160.120">
    <property type="match status" value="1"/>
</dbReference>
<dbReference type="Gene3D" id="3.30.70.3490">
    <property type="match status" value="1"/>
</dbReference>
<dbReference type="InterPro" id="IPR037239">
    <property type="entry name" value="OSBP_sf"/>
</dbReference>
<dbReference type="InterPro" id="IPR000648">
    <property type="entry name" value="Oxysterol-bd"/>
</dbReference>
<dbReference type="PANTHER" id="PTHR10972:SF136">
    <property type="entry name" value="OXYSTEROL-BINDING PROTEIN 8"/>
    <property type="match status" value="1"/>
</dbReference>
<dbReference type="PANTHER" id="PTHR10972">
    <property type="entry name" value="OXYSTEROL-BINDING PROTEIN-RELATED"/>
    <property type="match status" value="1"/>
</dbReference>
<dbReference type="Pfam" id="PF01237">
    <property type="entry name" value="Oxysterol_BP"/>
    <property type="match status" value="1"/>
</dbReference>
<dbReference type="SUPFAM" id="SSF144000">
    <property type="entry name" value="Oxysterol-binding protein-like"/>
    <property type="match status" value="1"/>
</dbReference>
<sequence>MFSGALNYMKGLVGTNENLQVEESGDNKGDIEPEQRKGLLKQLSSYVGKDITSLISLPVWIFEPVSFLQVMSEPLQYNALLSKASKQDSEFLCLAYLAAFNCALYSTAVRTRKPFNPILGETFEIVDKKGEFRFLAEQVSHHPPIGVSETISEDYTLQLETLLKSKFYGNSSEVEIDGTNHFFNKKTNHHYTWNHLVTCCHNIIIGSLWLDHYGDLVIENHTTGSKAVLKFAKSGWLGAGRYGVTGEIVDCEGDVRYRITGKWNESIQLFQVMDNGSSSTTSTCLWEASKEPINNKFLFPRWVEENVIDLNDEYKKILPVTDSRLRADRIALEEGNLDVAAKEKHNLEEKQREDKRQRVAENKEWETAQFKKVDDAKFGYRWNYCGNYWEEREERVKAAASN</sequence>
<gene>
    <name type="primary">osbH</name>
    <name type="ORF">DDB_G0283709</name>
</gene>
<accession>Q54QP6</accession>
<reference key="1">
    <citation type="journal article" date="2005" name="Nature">
        <title>The genome of the social amoeba Dictyostelium discoideum.</title>
        <authorList>
            <person name="Eichinger L."/>
            <person name="Pachebat J.A."/>
            <person name="Gloeckner G."/>
            <person name="Rajandream M.A."/>
            <person name="Sucgang R."/>
            <person name="Berriman M."/>
            <person name="Song J."/>
            <person name="Olsen R."/>
            <person name="Szafranski K."/>
            <person name="Xu Q."/>
            <person name="Tunggal B."/>
            <person name="Kummerfeld S."/>
            <person name="Madera M."/>
            <person name="Konfortov B.A."/>
            <person name="Rivero F."/>
            <person name="Bankier A.T."/>
            <person name="Lehmann R."/>
            <person name="Hamlin N."/>
            <person name="Davies R."/>
            <person name="Gaudet P."/>
            <person name="Fey P."/>
            <person name="Pilcher K."/>
            <person name="Chen G."/>
            <person name="Saunders D."/>
            <person name="Sodergren E.J."/>
            <person name="Davis P."/>
            <person name="Kerhornou A."/>
            <person name="Nie X."/>
            <person name="Hall N."/>
            <person name="Anjard C."/>
            <person name="Hemphill L."/>
            <person name="Bason N."/>
            <person name="Farbrother P."/>
            <person name="Desany B."/>
            <person name="Just E."/>
            <person name="Morio T."/>
            <person name="Rost R."/>
            <person name="Churcher C.M."/>
            <person name="Cooper J."/>
            <person name="Haydock S."/>
            <person name="van Driessche N."/>
            <person name="Cronin A."/>
            <person name="Goodhead I."/>
            <person name="Muzny D.M."/>
            <person name="Mourier T."/>
            <person name="Pain A."/>
            <person name="Lu M."/>
            <person name="Harper D."/>
            <person name="Lindsay R."/>
            <person name="Hauser H."/>
            <person name="James K.D."/>
            <person name="Quiles M."/>
            <person name="Madan Babu M."/>
            <person name="Saito T."/>
            <person name="Buchrieser C."/>
            <person name="Wardroper A."/>
            <person name="Felder M."/>
            <person name="Thangavelu M."/>
            <person name="Johnson D."/>
            <person name="Knights A."/>
            <person name="Loulseged H."/>
            <person name="Mungall K.L."/>
            <person name="Oliver K."/>
            <person name="Price C."/>
            <person name="Quail M.A."/>
            <person name="Urushihara H."/>
            <person name="Hernandez J."/>
            <person name="Rabbinowitsch E."/>
            <person name="Steffen D."/>
            <person name="Sanders M."/>
            <person name="Ma J."/>
            <person name="Kohara Y."/>
            <person name="Sharp S."/>
            <person name="Simmonds M.N."/>
            <person name="Spiegler S."/>
            <person name="Tivey A."/>
            <person name="Sugano S."/>
            <person name="White B."/>
            <person name="Walker D."/>
            <person name="Woodward J.R."/>
            <person name="Winckler T."/>
            <person name="Tanaka Y."/>
            <person name="Shaulsky G."/>
            <person name="Schleicher M."/>
            <person name="Weinstock G.M."/>
            <person name="Rosenthal A."/>
            <person name="Cox E.C."/>
            <person name="Chisholm R.L."/>
            <person name="Gibbs R.A."/>
            <person name="Loomis W.F."/>
            <person name="Platzer M."/>
            <person name="Kay R.R."/>
            <person name="Williams J.G."/>
            <person name="Dear P.H."/>
            <person name="Noegel A.A."/>
            <person name="Barrell B.G."/>
            <person name="Kuspa A."/>
        </authorList>
    </citation>
    <scope>NUCLEOTIDE SEQUENCE [LARGE SCALE GENOMIC DNA]</scope>
    <source>
        <strain>AX4</strain>
    </source>
</reference>
<reference key="2">
    <citation type="journal article" date="2006" name="Mol. Cell. Proteomics">
        <title>Proteomics fingerprinting of phagosome maturation and evidence for the role of a Galpha during uptake.</title>
        <authorList>
            <person name="Gotthardt D."/>
            <person name="Blancheteau V."/>
            <person name="Bosserhoff A."/>
            <person name="Ruppert T."/>
            <person name="Delorenzi M."/>
            <person name="Soldati T."/>
        </authorList>
    </citation>
    <scope>IDENTIFICATION BY MASS SPECTROMETRY [LARGE SCALE ANALYSIS]</scope>
    <source>
        <strain>AX2</strain>
    </source>
</reference>
<organism>
    <name type="scientific">Dictyostelium discoideum</name>
    <name type="common">Social amoeba</name>
    <dbReference type="NCBI Taxonomy" id="44689"/>
    <lineage>
        <taxon>Eukaryota</taxon>
        <taxon>Amoebozoa</taxon>
        <taxon>Evosea</taxon>
        <taxon>Eumycetozoa</taxon>
        <taxon>Dictyostelia</taxon>
        <taxon>Dictyosteliales</taxon>
        <taxon>Dictyosteliaceae</taxon>
        <taxon>Dictyostelium</taxon>
    </lineage>
</organism>
<evidence type="ECO:0000255" key="1"/>
<evidence type="ECO:0000305" key="2"/>
<proteinExistence type="evidence at protein level"/>
<feature type="chain" id="PRO_0000328471" description="Oxysterol-binding protein 8">
    <location>
        <begin position="1"/>
        <end position="402"/>
    </location>
</feature>
<feature type="coiled-coil region" evidence="1">
    <location>
        <begin position="328"/>
        <end position="361"/>
    </location>
</feature>
<comment type="similarity">
    <text evidence="2">Belongs to the OSBP family.</text>
</comment>
<name>OSB8_DICDI</name>